<proteinExistence type="inferred from homology"/>
<feature type="chain" id="PRO_0000267375" description="7-methyl-GTP pyrophosphatase">
    <location>
        <begin position="1"/>
        <end position="194"/>
    </location>
</feature>
<feature type="active site" description="Proton acceptor" evidence="1">
    <location>
        <position position="67"/>
    </location>
</feature>
<feature type="site" description="Important for substrate specificity" evidence="1">
    <location>
        <position position="11"/>
    </location>
</feature>
<feature type="site" description="Important for substrate specificity" evidence="1">
    <location>
        <position position="68"/>
    </location>
</feature>
<feature type="site" description="Important for substrate specificity" evidence="1">
    <location>
        <position position="152"/>
    </location>
</feature>
<accession>Q15TZ2</accession>
<name>NTPPB_PSEA6</name>
<reference key="1">
    <citation type="submission" date="2006-06" db="EMBL/GenBank/DDBJ databases">
        <title>Complete sequence of Pseudoalteromonas atlantica T6c.</title>
        <authorList>
            <consortium name="US DOE Joint Genome Institute"/>
            <person name="Copeland A."/>
            <person name="Lucas S."/>
            <person name="Lapidus A."/>
            <person name="Barry K."/>
            <person name="Detter J.C."/>
            <person name="Glavina del Rio T."/>
            <person name="Hammon N."/>
            <person name="Israni S."/>
            <person name="Dalin E."/>
            <person name="Tice H."/>
            <person name="Pitluck S."/>
            <person name="Saunders E."/>
            <person name="Brettin T."/>
            <person name="Bruce D."/>
            <person name="Han C."/>
            <person name="Tapia R."/>
            <person name="Gilna P."/>
            <person name="Schmutz J."/>
            <person name="Larimer F."/>
            <person name="Land M."/>
            <person name="Hauser L."/>
            <person name="Kyrpides N."/>
            <person name="Kim E."/>
            <person name="Karls A.C."/>
            <person name="Bartlett D."/>
            <person name="Higgins B.P."/>
            <person name="Richardson P."/>
        </authorList>
    </citation>
    <scope>NUCLEOTIDE SEQUENCE [LARGE SCALE GENOMIC DNA]</scope>
    <source>
        <strain>T6c / ATCC BAA-1087</strain>
    </source>
</reference>
<gene>
    <name type="ordered locus">Patl_2128</name>
</gene>
<evidence type="ECO:0000255" key="1">
    <source>
        <dbReference type="HAMAP-Rule" id="MF_00528"/>
    </source>
</evidence>
<protein>
    <recommendedName>
        <fullName evidence="1">7-methyl-GTP pyrophosphatase</fullName>
        <shortName evidence="1">m(7)GTP pyrophosphatase</shortName>
        <ecNumber evidence="1">3.6.1.-</ecNumber>
    </recommendedName>
</protein>
<organism>
    <name type="scientific">Pseudoalteromonas atlantica (strain T6c / ATCC BAA-1087)</name>
    <dbReference type="NCBI Taxonomy" id="3042615"/>
    <lineage>
        <taxon>Bacteria</taxon>
        <taxon>Pseudomonadati</taxon>
        <taxon>Pseudomonadota</taxon>
        <taxon>Gammaproteobacteria</taxon>
        <taxon>Alteromonadales</taxon>
        <taxon>Alteromonadaceae</taxon>
        <taxon>Paraglaciecola</taxon>
    </lineage>
</organism>
<sequence>MKLILASTSPYRKNILEKLCIPFSCASPSADETPMNNESANTLVARLAAEKALSVGVTQKGLIIGSDQVACVDGVILGKPGNKLKAFDQLTQLSGKTVTFFTGLSLLDSKTQRQETIVETFDVIFKSLSAKQISRYLELEEPYDCAGSFKSEGLGIALFSSLDGRDPNTLIGLPLIALVAMLKKFEIDVFEHMQ</sequence>
<dbReference type="EC" id="3.6.1.-" evidence="1"/>
<dbReference type="EMBL" id="CP000388">
    <property type="protein sequence ID" value="ABG40646.1"/>
    <property type="molecule type" value="Genomic_DNA"/>
</dbReference>
<dbReference type="RefSeq" id="WP_011574933.1">
    <property type="nucleotide sequence ID" value="NC_008228.1"/>
</dbReference>
<dbReference type="SMR" id="Q15TZ2"/>
<dbReference type="STRING" id="342610.Patl_2128"/>
<dbReference type="KEGG" id="pat:Patl_2128"/>
<dbReference type="eggNOG" id="COG0424">
    <property type="taxonomic scope" value="Bacteria"/>
</dbReference>
<dbReference type="HOGENOM" id="CLU_040416_1_0_6"/>
<dbReference type="OrthoDB" id="9813694at2"/>
<dbReference type="Proteomes" id="UP000001981">
    <property type="component" value="Chromosome"/>
</dbReference>
<dbReference type="GO" id="GO:0005737">
    <property type="term" value="C:cytoplasm"/>
    <property type="evidence" value="ECO:0007669"/>
    <property type="project" value="UniProtKB-SubCell"/>
</dbReference>
<dbReference type="GO" id="GO:0047429">
    <property type="term" value="F:nucleoside triphosphate diphosphatase activity"/>
    <property type="evidence" value="ECO:0007669"/>
    <property type="project" value="InterPro"/>
</dbReference>
<dbReference type="GO" id="GO:0009117">
    <property type="term" value="P:nucleotide metabolic process"/>
    <property type="evidence" value="ECO:0007669"/>
    <property type="project" value="UniProtKB-KW"/>
</dbReference>
<dbReference type="CDD" id="cd00555">
    <property type="entry name" value="Maf"/>
    <property type="match status" value="1"/>
</dbReference>
<dbReference type="FunFam" id="3.90.950.10:FF:000005">
    <property type="entry name" value="7-methyl-GTP pyrophosphatase"/>
    <property type="match status" value="1"/>
</dbReference>
<dbReference type="Gene3D" id="3.90.950.10">
    <property type="match status" value="1"/>
</dbReference>
<dbReference type="HAMAP" id="MF_00528">
    <property type="entry name" value="Maf"/>
    <property type="match status" value="1"/>
</dbReference>
<dbReference type="InterPro" id="IPR029001">
    <property type="entry name" value="ITPase-like_fam"/>
</dbReference>
<dbReference type="InterPro" id="IPR003697">
    <property type="entry name" value="Maf-like"/>
</dbReference>
<dbReference type="NCBIfam" id="TIGR00172">
    <property type="entry name" value="maf"/>
    <property type="match status" value="1"/>
</dbReference>
<dbReference type="PANTHER" id="PTHR43213:SF10">
    <property type="entry name" value="7-METHYL-GTP PYROPHOSPHATASE"/>
    <property type="match status" value="1"/>
</dbReference>
<dbReference type="PANTHER" id="PTHR43213">
    <property type="entry name" value="BIFUNCTIONAL DTTP/UTP PYROPHOSPHATASE/METHYLTRANSFERASE PROTEIN-RELATED"/>
    <property type="match status" value="1"/>
</dbReference>
<dbReference type="Pfam" id="PF02545">
    <property type="entry name" value="Maf"/>
    <property type="match status" value="1"/>
</dbReference>
<dbReference type="PIRSF" id="PIRSF006305">
    <property type="entry name" value="Maf"/>
    <property type="match status" value="1"/>
</dbReference>
<dbReference type="SUPFAM" id="SSF52972">
    <property type="entry name" value="ITPase-like"/>
    <property type="match status" value="1"/>
</dbReference>
<comment type="function">
    <text evidence="1">Nucleoside triphosphate pyrophosphatase that hydrolyzes 7-methyl-GTP (m(7)GTP). May have a dual role in cell division arrest and in preventing the incorporation of modified nucleotides into cellular nucleic acids.</text>
</comment>
<comment type="catalytic activity">
    <reaction evidence="1">
        <text>N(7)-methyl-GTP + H2O = N(7)-methyl-GMP + diphosphate + H(+)</text>
        <dbReference type="Rhea" id="RHEA:58744"/>
        <dbReference type="ChEBI" id="CHEBI:15377"/>
        <dbReference type="ChEBI" id="CHEBI:15378"/>
        <dbReference type="ChEBI" id="CHEBI:33019"/>
        <dbReference type="ChEBI" id="CHEBI:58285"/>
        <dbReference type="ChEBI" id="CHEBI:87133"/>
    </reaction>
</comment>
<comment type="cofactor">
    <cofactor evidence="1">
        <name>a divalent metal cation</name>
        <dbReference type="ChEBI" id="CHEBI:60240"/>
    </cofactor>
</comment>
<comment type="subcellular location">
    <subcellularLocation>
        <location evidence="1">Cytoplasm</location>
    </subcellularLocation>
</comment>
<comment type="similarity">
    <text evidence="1">Belongs to the Maf family. YceF subfamily.</text>
</comment>
<keyword id="KW-0963">Cytoplasm</keyword>
<keyword id="KW-0378">Hydrolase</keyword>
<keyword id="KW-0546">Nucleotide metabolism</keyword>